<sequence length="137" mass="15086">MQANDSSNKVVYWGTGRRKAAIARVRLVPGQGEVIVNGKPGEIYFNRIANYIQSLKAPLETLGLEGEYNILVNAHGGGLTGQADAVKLGVARALCQLSPENRQPLKAEGYLTRDPRAKERKKYGLHKARKAPQYSKR</sequence>
<keyword id="KW-1185">Reference proteome</keyword>
<keyword id="KW-0687">Ribonucleoprotein</keyword>
<keyword id="KW-0689">Ribosomal protein</keyword>
<accession>P73293</accession>
<organism>
    <name type="scientific">Synechocystis sp. (strain ATCC 27184 / PCC 6803 / Kazusa)</name>
    <dbReference type="NCBI Taxonomy" id="1111708"/>
    <lineage>
        <taxon>Bacteria</taxon>
        <taxon>Bacillati</taxon>
        <taxon>Cyanobacteriota</taxon>
        <taxon>Cyanophyceae</taxon>
        <taxon>Synechococcales</taxon>
        <taxon>Merismopediaceae</taxon>
        <taxon>Synechocystis</taxon>
    </lineage>
</organism>
<reference key="1">
    <citation type="journal article" date="1996" name="DNA Res.">
        <title>Sequence analysis of the genome of the unicellular cyanobacterium Synechocystis sp. strain PCC6803. II. Sequence determination of the entire genome and assignment of potential protein-coding regions.</title>
        <authorList>
            <person name="Kaneko T."/>
            <person name="Sato S."/>
            <person name="Kotani H."/>
            <person name="Tanaka A."/>
            <person name="Asamizu E."/>
            <person name="Nakamura Y."/>
            <person name="Miyajima N."/>
            <person name="Hirosawa M."/>
            <person name="Sugiura M."/>
            <person name="Sasamoto S."/>
            <person name="Kimura T."/>
            <person name="Hosouchi T."/>
            <person name="Matsuno A."/>
            <person name="Muraki A."/>
            <person name="Nakazaki N."/>
            <person name="Naruo K."/>
            <person name="Okumura S."/>
            <person name="Shimpo S."/>
            <person name="Takeuchi C."/>
            <person name="Wada T."/>
            <person name="Watanabe A."/>
            <person name="Yamada M."/>
            <person name="Yasuda M."/>
            <person name="Tabata S."/>
        </authorList>
    </citation>
    <scope>NUCLEOTIDE SEQUENCE [LARGE SCALE GENOMIC DNA]</scope>
    <source>
        <strain>ATCC 27184 / PCC 6803 / Kazusa</strain>
    </source>
</reference>
<proteinExistence type="inferred from homology"/>
<comment type="similarity">
    <text evidence="2">Belongs to the universal ribosomal protein uS9 family.</text>
</comment>
<name>RS9_SYNY3</name>
<feature type="chain" id="PRO_0000111428" description="Small ribosomal subunit protein uS9">
    <location>
        <begin position="1"/>
        <end position="137"/>
    </location>
</feature>
<feature type="region of interest" description="Disordered" evidence="1">
    <location>
        <begin position="105"/>
        <end position="137"/>
    </location>
</feature>
<feature type="compositionally biased region" description="Basic residues" evidence="1">
    <location>
        <begin position="118"/>
        <end position="137"/>
    </location>
</feature>
<dbReference type="EMBL" id="BA000022">
    <property type="protein sequence ID" value="BAA17321.1"/>
    <property type="molecule type" value="Genomic_DNA"/>
</dbReference>
<dbReference type="PIR" id="S77474">
    <property type="entry name" value="S77474"/>
</dbReference>
<dbReference type="SMR" id="P73293"/>
<dbReference type="FunCoup" id="P73293">
    <property type="interactions" value="515"/>
</dbReference>
<dbReference type="IntAct" id="P73293">
    <property type="interactions" value="1"/>
</dbReference>
<dbReference type="STRING" id="1148.gene:10498184"/>
<dbReference type="PaxDb" id="1148-1652399"/>
<dbReference type="EnsemblBacteria" id="BAA17321">
    <property type="protein sequence ID" value="BAA17321"/>
    <property type="gene ID" value="BAA17321"/>
</dbReference>
<dbReference type="KEGG" id="syn:sll1822"/>
<dbReference type="eggNOG" id="COG0103">
    <property type="taxonomic scope" value="Bacteria"/>
</dbReference>
<dbReference type="InParanoid" id="P73293"/>
<dbReference type="PhylomeDB" id="P73293"/>
<dbReference type="Proteomes" id="UP000001425">
    <property type="component" value="Chromosome"/>
</dbReference>
<dbReference type="GO" id="GO:0022627">
    <property type="term" value="C:cytosolic small ribosomal subunit"/>
    <property type="evidence" value="ECO:0000318"/>
    <property type="project" value="GO_Central"/>
</dbReference>
<dbReference type="GO" id="GO:0003723">
    <property type="term" value="F:RNA binding"/>
    <property type="evidence" value="ECO:0000318"/>
    <property type="project" value="GO_Central"/>
</dbReference>
<dbReference type="GO" id="GO:0003735">
    <property type="term" value="F:structural constituent of ribosome"/>
    <property type="evidence" value="ECO:0000318"/>
    <property type="project" value="GO_Central"/>
</dbReference>
<dbReference type="GO" id="GO:0006412">
    <property type="term" value="P:translation"/>
    <property type="evidence" value="ECO:0007669"/>
    <property type="project" value="UniProtKB-UniRule"/>
</dbReference>
<dbReference type="FunFam" id="3.30.230.10:FF:000001">
    <property type="entry name" value="30S ribosomal protein S9"/>
    <property type="match status" value="1"/>
</dbReference>
<dbReference type="Gene3D" id="3.30.230.10">
    <property type="match status" value="1"/>
</dbReference>
<dbReference type="HAMAP" id="MF_00532_B">
    <property type="entry name" value="Ribosomal_uS9_B"/>
    <property type="match status" value="1"/>
</dbReference>
<dbReference type="InterPro" id="IPR020568">
    <property type="entry name" value="Ribosomal_Su5_D2-typ_SF"/>
</dbReference>
<dbReference type="InterPro" id="IPR000754">
    <property type="entry name" value="Ribosomal_uS9"/>
</dbReference>
<dbReference type="InterPro" id="IPR023035">
    <property type="entry name" value="Ribosomal_uS9_bac/plastid"/>
</dbReference>
<dbReference type="InterPro" id="IPR020574">
    <property type="entry name" value="Ribosomal_uS9_CS"/>
</dbReference>
<dbReference type="InterPro" id="IPR014721">
    <property type="entry name" value="Ribsml_uS5_D2-typ_fold_subgr"/>
</dbReference>
<dbReference type="NCBIfam" id="NF001099">
    <property type="entry name" value="PRK00132.1"/>
    <property type="match status" value="1"/>
</dbReference>
<dbReference type="PANTHER" id="PTHR21569">
    <property type="entry name" value="RIBOSOMAL PROTEIN S9"/>
    <property type="match status" value="1"/>
</dbReference>
<dbReference type="PANTHER" id="PTHR21569:SF1">
    <property type="entry name" value="SMALL RIBOSOMAL SUBUNIT PROTEIN US9M"/>
    <property type="match status" value="1"/>
</dbReference>
<dbReference type="Pfam" id="PF00380">
    <property type="entry name" value="Ribosomal_S9"/>
    <property type="match status" value="1"/>
</dbReference>
<dbReference type="SUPFAM" id="SSF54211">
    <property type="entry name" value="Ribosomal protein S5 domain 2-like"/>
    <property type="match status" value="1"/>
</dbReference>
<dbReference type="PROSITE" id="PS00360">
    <property type="entry name" value="RIBOSOMAL_S9"/>
    <property type="match status" value="1"/>
</dbReference>
<gene>
    <name type="primary">rpsI</name>
    <name type="synonym">rps9</name>
    <name type="ordered locus">sll1822</name>
</gene>
<evidence type="ECO:0000256" key="1">
    <source>
        <dbReference type="SAM" id="MobiDB-lite"/>
    </source>
</evidence>
<evidence type="ECO:0000305" key="2"/>
<protein>
    <recommendedName>
        <fullName evidence="2">Small ribosomal subunit protein uS9</fullName>
    </recommendedName>
    <alternativeName>
        <fullName>30S ribosomal protein S9</fullName>
    </alternativeName>
</protein>